<keyword id="KW-0349">Heme</keyword>
<keyword id="KW-0350">Heme biosynthesis</keyword>
<keyword id="KW-0408">Iron</keyword>
<keyword id="KW-0479">Metal-binding</keyword>
<keyword id="KW-0560">Oxidoreductase</keyword>
<feature type="chain" id="PRO_1000145924" description="Coproheme decarboxylase">
    <location>
        <begin position="1"/>
        <end position="247"/>
    </location>
</feature>
<feature type="active site" evidence="1">
    <location>
        <position position="143"/>
    </location>
</feature>
<feature type="binding site" evidence="1">
    <location>
        <position position="129"/>
    </location>
    <ligand>
        <name>Fe-coproporphyrin III</name>
        <dbReference type="ChEBI" id="CHEBI:68438"/>
    </ligand>
</feature>
<feature type="binding site" evidence="1">
    <location>
        <begin position="143"/>
        <end position="147"/>
    </location>
    <ligand>
        <name>Fe-coproporphyrin III</name>
        <dbReference type="ChEBI" id="CHEBI:68438"/>
    </ligand>
</feature>
<feature type="binding site" description="axial binding residue" evidence="1">
    <location>
        <position position="170"/>
    </location>
    <ligand>
        <name>Fe-coproporphyrin III</name>
        <dbReference type="ChEBI" id="CHEBI:68438"/>
    </ligand>
    <ligandPart>
        <name>Fe</name>
        <dbReference type="ChEBI" id="CHEBI:18248"/>
    </ligandPart>
</feature>
<feature type="binding site" evidence="1">
    <location>
        <position position="183"/>
    </location>
    <ligand>
        <name>Fe-coproporphyrin III</name>
        <dbReference type="ChEBI" id="CHEBI:68438"/>
    </ligand>
</feature>
<feature type="binding site" evidence="1">
    <location>
        <position position="221"/>
    </location>
    <ligand>
        <name>Fe-coproporphyrin III</name>
        <dbReference type="ChEBI" id="CHEBI:68438"/>
    </ligand>
</feature>
<accession>B7HYE9</accession>
<name>CHDC_BACC7</name>
<organism>
    <name type="scientific">Bacillus cereus (strain AH187)</name>
    <dbReference type="NCBI Taxonomy" id="405534"/>
    <lineage>
        <taxon>Bacteria</taxon>
        <taxon>Bacillati</taxon>
        <taxon>Bacillota</taxon>
        <taxon>Bacilli</taxon>
        <taxon>Bacillales</taxon>
        <taxon>Bacillaceae</taxon>
        <taxon>Bacillus</taxon>
        <taxon>Bacillus cereus group</taxon>
    </lineage>
</organism>
<protein>
    <recommendedName>
        <fullName evidence="1">Coproheme decarboxylase</fullName>
        <ecNumber evidence="1">1.3.98.5</ecNumber>
    </recommendedName>
    <alternativeName>
        <fullName evidence="1">Coproheme III oxidative decarboxylase</fullName>
    </alternativeName>
    <alternativeName>
        <fullName evidence="1">Hydrogen peroxide-dependent heme synthase</fullName>
    </alternativeName>
</protein>
<gene>
    <name evidence="1" type="primary">chdC</name>
    <name type="ordered locus">BCAH187_A5567</name>
</gene>
<comment type="function">
    <text evidence="1">Involved in coproporphyrin-dependent heme b biosynthesis. Catalyzes the decarboxylation of Fe-coproporphyrin III (coproheme) to heme b (protoheme IX), the last step of the pathway. The reaction occurs in a stepwise manner with a three-propionate intermediate.</text>
</comment>
<comment type="catalytic activity">
    <reaction evidence="1">
        <text>Fe-coproporphyrin III + 2 H2O2 + 2 H(+) = heme b + 2 CO2 + 4 H2O</text>
        <dbReference type="Rhea" id="RHEA:56516"/>
        <dbReference type="ChEBI" id="CHEBI:15377"/>
        <dbReference type="ChEBI" id="CHEBI:15378"/>
        <dbReference type="ChEBI" id="CHEBI:16240"/>
        <dbReference type="ChEBI" id="CHEBI:16526"/>
        <dbReference type="ChEBI" id="CHEBI:60344"/>
        <dbReference type="ChEBI" id="CHEBI:68438"/>
        <dbReference type="EC" id="1.3.98.5"/>
    </reaction>
    <physiologicalReaction direction="left-to-right" evidence="1">
        <dbReference type="Rhea" id="RHEA:56517"/>
    </physiologicalReaction>
</comment>
<comment type="catalytic activity">
    <reaction evidence="1">
        <text>Fe-coproporphyrin III + H2O2 + H(+) = harderoheme III + CO2 + 2 H2O</text>
        <dbReference type="Rhea" id="RHEA:57940"/>
        <dbReference type="ChEBI" id="CHEBI:15377"/>
        <dbReference type="ChEBI" id="CHEBI:15378"/>
        <dbReference type="ChEBI" id="CHEBI:16240"/>
        <dbReference type="ChEBI" id="CHEBI:16526"/>
        <dbReference type="ChEBI" id="CHEBI:68438"/>
        <dbReference type="ChEBI" id="CHEBI:142463"/>
    </reaction>
    <physiologicalReaction direction="left-to-right" evidence="1">
        <dbReference type="Rhea" id="RHEA:57941"/>
    </physiologicalReaction>
</comment>
<comment type="catalytic activity">
    <reaction evidence="1">
        <text>harderoheme III + H2O2 + H(+) = heme b + CO2 + 2 H2O</text>
        <dbReference type="Rhea" id="RHEA:57944"/>
        <dbReference type="ChEBI" id="CHEBI:15377"/>
        <dbReference type="ChEBI" id="CHEBI:15378"/>
        <dbReference type="ChEBI" id="CHEBI:16240"/>
        <dbReference type="ChEBI" id="CHEBI:16526"/>
        <dbReference type="ChEBI" id="CHEBI:60344"/>
        <dbReference type="ChEBI" id="CHEBI:142463"/>
    </reaction>
    <physiologicalReaction direction="left-to-right" evidence="1">
        <dbReference type="Rhea" id="RHEA:57945"/>
    </physiologicalReaction>
</comment>
<comment type="cofactor">
    <cofactor evidence="1">
        <name>Fe-coproporphyrin III</name>
        <dbReference type="ChEBI" id="CHEBI:68438"/>
    </cofactor>
    <text evidence="1">Fe-coproporphyrin III acts both as a substrate and a redox cofactor.</text>
</comment>
<comment type="pathway">
    <text evidence="1">Porphyrin-containing compound metabolism; protoheme biosynthesis.</text>
</comment>
<comment type="similarity">
    <text evidence="1">Belongs to the ChdC family. Type 1 subfamily.</text>
</comment>
<reference key="1">
    <citation type="submission" date="2008-10" db="EMBL/GenBank/DDBJ databases">
        <title>Genome sequence of Bacillus cereus AH187.</title>
        <authorList>
            <person name="Dodson R.J."/>
            <person name="Durkin A.S."/>
            <person name="Rosovitz M.J."/>
            <person name="Rasko D.A."/>
            <person name="Kolsto A.B."/>
            <person name="Okstad O.A."/>
            <person name="Ravel J."/>
            <person name="Sutton G."/>
        </authorList>
    </citation>
    <scope>NUCLEOTIDE SEQUENCE [LARGE SCALE GENOMIC DNA]</scope>
    <source>
        <strain>AH187</strain>
    </source>
</reference>
<evidence type="ECO:0000255" key="1">
    <source>
        <dbReference type="HAMAP-Rule" id="MF_01442"/>
    </source>
</evidence>
<sequence>MSEATTTLDGWYCLHDLRSIDWAAWKTLSSDERGQAVSEFLNVVEKWNDVAAAKKGSHAMYTVVGQKADIMLMILRPTMEELNEIETELNKTTLAEYMVPAYSYVSVVELSNYLPADEDPYQNPQILARLYPELPKANHICFYPMDKRRQGDDNWYMLPMEERKKMMYSHSKIGRQYAGKVRQVISGSVGFDDFEWGVTLFADDVLQFKKLIYEMRFDEVSARYGEFGTFFVGNILPDEKVEKFLHI</sequence>
<dbReference type="EC" id="1.3.98.5" evidence="1"/>
<dbReference type="EMBL" id="CP001177">
    <property type="protein sequence ID" value="ACJ78177.1"/>
    <property type="molecule type" value="Genomic_DNA"/>
</dbReference>
<dbReference type="SMR" id="B7HYE9"/>
<dbReference type="KEGG" id="bcr:BCAH187_A5567"/>
<dbReference type="HOGENOM" id="CLU_063226_1_0_9"/>
<dbReference type="UniPathway" id="UPA00252"/>
<dbReference type="Proteomes" id="UP000002214">
    <property type="component" value="Chromosome"/>
</dbReference>
<dbReference type="GO" id="GO:0020037">
    <property type="term" value="F:heme binding"/>
    <property type="evidence" value="ECO:0007669"/>
    <property type="project" value="InterPro"/>
</dbReference>
<dbReference type="GO" id="GO:0046872">
    <property type="term" value="F:metal ion binding"/>
    <property type="evidence" value="ECO:0007669"/>
    <property type="project" value="UniProtKB-KW"/>
</dbReference>
<dbReference type="GO" id="GO:0016634">
    <property type="term" value="F:oxidoreductase activity, acting on the CH-CH group of donors, oxygen as acceptor"/>
    <property type="evidence" value="ECO:0007669"/>
    <property type="project" value="UniProtKB-UniRule"/>
</dbReference>
<dbReference type="GO" id="GO:0004601">
    <property type="term" value="F:peroxidase activity"/>
    <property type="evidence" value="ECO:0007669"/>
    <property type="project" value="InterPro"/>
</dbReference>
<dbReference type="GO" id="GO:0006785">
    <property type="term" value="P:heme B biosynthetic process"/>
    <property type="evidence" value="ECO:0007669"/>
    <property type="project" value="UniProtKB-UniRule"/>
</dbReference>
<dbReference type="Gene3D" id="3.30.70.1030">
    <property type="entry name" value="Apc35880, domain 1"/>
    <property type="match status" value="2"/>
</dbReference>
<dbReference type="HAMAP" id="MF_01442">
    <property type="entry name" value="Coproheme_decarbox_1"/>
    <property type="match status" value="1"/>
</dbReference>
<dbReference type="InterPro" id="IPR031332">
    <property type="entry name" value="CHDC"/>
</dbReference>
<dbReference type="InterPro" id="IPR010644">
    <property type="entry name" value="ChdC/CLD"/>
</dbReference>
<dbReference type="InterPro" id="IPR011008">
    <property type="entry name" value="Dimeric_a/b-barrel"/>
</dbReference>
<dbReference type="NCBIfam" id="NF008913">
    <property type="entry name" value="PRK12276.1"/>
    <property type="match status" value="1"/>
</dbReference>
<dbReference type="PANTHER" id="PTHR36843:SF1">
    <property type="entry name" value="COPROHEME DECARBOXYLASE"/>
    <property type="match status" value="1"/>
</dbReference>
<dbReference type="PANTHER" id="PTHR36843">
    <property type="entry name" value="HEME-DEPENDENT PEROXIDASE YWFI-RELATED"/>
    <property type="match status" value="1"/>
</dbReference>
<dbReference type="Pfam" id="PF06778">
    <property type="entry name" value="Chlor_dismutase"/>
    <property type="match status" value="1"/>
</dbReference>
<dbReference type="SUPFAM" id="SSF54909">
    <property type="entry name" value="Dimeric alpha+beta barrel"/>
    <property type="match status" value="1"/>
</dbReference>
<proteinExistence type="inferred from homology"/>